<evidence type="ECO:0000255" key="1">
    <source>
        <dbReference type="HAMAP-Rule" id="MF_01838"/>
    </source>
</evidence>
<keyword id="KW-0275">Fatty acid biosynthesis</keyword>
<keyword id="KW-0276">Fatty acid metabolism</keyword>
<keyword id="KW-0444">Lipid biosynthesis</keyword>
<keyword id="KW-0443">Lipid metabolism</keyword>
<keyword id="KW-0520">NAD</keyword>
<keyword id="KW-0560">Oxidoreductase</keyword>
<dbReference type="EC" id="1.3.1.9" evidence="1"/>
<dbReference type="EMBL" id="CP000472">
    <property type="protein sequence ID" value="ACJ29960.1"/>
    <property type="molecule type" value="Genomic_DNA"/>
</dbReference>
<dbReference type="RefSeq" id="WP_020913311.1">
    <property type="nucleotide sequence ID" value="NC_011566.1"/>
</dbReference>
<dbReference type="SMR" id="B8CRF2"/>
<dbReference type="STRING" id="225849.swp_3256"/>
<dbReference type="KEGG" id="swp:swp_3256"/>
<dbReference type="eggNOG" id="COG3007">
    <property type="taxonomic scope" value="Bacteria"/>
</dbReference>
<dbReference type="HOGENOM" id="CLU_057698_1_0_6"/>
<dbReference type="OrthoDB" id="9802260at2"/>
<dbReference type="UniPathway" id="UPA00094"/>
<dbReference type="Proteomes" id="UP000000753">
    <property type="component" value="Chromosome"/>
</dbReference>
<dbReference type="GO" id="GO:0004318">
    <property type="term" value="F:enoyl-[acyl-carrier-protein] reductase (NADH) activity"/>
    <property type="evidence" value="ECO:0007669"/>
    <property type="project" value="UniProtKB-UniRule"/>
</dbReference>
<dbReference type="GO" id="GO:0051287">
    <property type="term" value="F:NAD binding"/>
    <property type="evidence" value="ECO:0007669"/>
    <property type="project" value="UniProtKB-UniRule"/>
</dbReference>
<dbReference type="GO" id="GO:0050343">
    <property type="term" value="F:trans-2-enoyl-CoA reductase (NADH) activity"/>
    <property type="evidence" value="ECO:0007669"/>
    <property type="project" value="TreeGrafter"/>
</dbReference>
<dbReference type="GO" id="GO:0006633">
    <property type="term" value="P:fatty acid biosynthetic process"/>
    <property type="evidence" value="ECO:0007669"/>
    <property type="project" value="UniProtKB-UniRule"/>
</dbReference>
<dbReference type="FunFam" id="3.40.50.720:FF:000221">
    <property type="entry name" value="Enoyl-[acyl-carrier-protein] reductase [NADH]"/>
    <property type="match status" value="1"/>
</dbReference>
<dbReference type="Gene3D" id="3.40.50.720">
    <property type="entry name" value="NAD(P)-binding Rossmann-like Domain"/>
    <property type="match status" value="1"/>
</dbReference>
<dbReference type="HAMAP" id="MF_01838">
    <property type="entry name" value="FabV_reductase"/>
    <property type="match status" value="1"/>
</dbReference>
<dbReference type="InterPro" id="IPR024906">
    <property type="entry name" value="Eno_Rdtase_FAD-bd_dom"/>
</dbReference>
<dbReference type="InterPro" id="IPR024910">
    <property type="entry name" value="Enoyl-CoA_Rdtase_cat_dom"/>
</dbReference>
<dbReference type="InterPro" id="IPR050048">
    <property type="entry name" value="FabV-like_NADH_b"/>
</dbReference>
<dbReference type="InterPro" id="IPR010758">
    <property type="entry name" value="Trans-2-enoyl-CoA_reductase"/>
</dbReference>
<dbReference type="NCBIfam" id="NF043048">
    <property type="entry name" value="EnoyACPredFabV"/>
    <property type="match status" value="1"/>
</dbReference>
<dbReference type="NCBIfam" id="NF010177">
    <property type="entry name" value="PRK13656.1"/>
    <property type="match status" value="1"/>
</dbReference>
<dbReference type="PANTHER" id="PTHR37480">
    <property type="entry name" value="ENOYL-[ACYL-CARRIER-PROTEIN] REDUCTASE [NADH]"/>
    <property type="match status" value="1"/>
</dbReference>
<dbReference type="PANTHER" id="PTHR37480:SF1">
    <property type="entry name" value="ENOYL-[ACYL-CARRIER-PROTEIN] REDUCTASE [NADH]"/>
    <property type="match status" value="1"/>
</dbReference>
<dbReference type="Pfam" id="PF07055">
    <property type="entry name" value="Eno-Rase_FAD_bd"/>
    <property type="match status" value="1"/>
</dbReference>
<dbReference type="Pfam" id="PF12242">
    <property type="entry name" value="Eno-Rase_NADH_b"/>
    <property type="match status" value="1"/>
</dbReference>
<dbReference type="Pfam" id="PF12241">
    <property type="entry name" value="Enoyl_reductase"/>
    <property type="match status" value="1"/>
</dbReference>
<sequence length="400" mass="43915">MIIKPRIRGFICTTTHPVGCEANVLEQINITKAKGKIANGPKKVLVVGSSSGYGLSSRITAAFGSDAATLGVFFEKPSSETKPGTAGWYNSAAFDKFAKAEGLYSKSINCDAFSHEAKQKAIELIKEDLGQVDMVVYSLASPVRKLPDSGELIRSSLKPIGEPYKATAVDTNKDIIIEASVEPATEQEINDTVTVMGGEDWELWMQALAEAGVLADGCKTVAYSYIGTELTWPIYWHGALGKAKMDLDRAAHALDDKLSATGGSANVAVLKSVVTQASSAIPVMPLYIAMVFKKMRAEGLHEGCIEQINRMFSERLYKADGSAAEVDESNRLRLDDWELREEIQQHCRDMWPQVTSENLAELTDYREYKEEFLKLFGFGIEGIDYEQDVNPNVEFDVVSI</sequence>
<reference key="1">
    <citation type="journal article" date="2008" name="PLoS ONE">
        <title>Environmental adaptation: genomic analysis of the piezotolerant and psychrotolerant deep-sea iron reducing bacterium Shewanella piezotolerans WP3.</title>
        <authorList>
            <person name="Wang F."/>
            <person name="Wang J."/>
            <person name="Jian H."/>
            <person name="Zhang B."/>
            <person name="Li S."/>
            <person name="Wang F."/>
            <person name="Zeng X."/>
            <person name="Gao L."/>
            <person name="Bartlett D.H."/>
            <person name="Yu J."/>
            <person name="Hu S."/>
            <person name="Xiao X."/>
        </authorList>
    </citation>
    <scope>NUCLEOTIDE SEQUENCE [LARGE SCALE GENOMIC DNA]</scope>
    <source>
        <strain>WP3 / JCM 13877</strain>
    </source>
</reference>
<feature type="chain" id="PRO_1000188369" description="Enoyl-[acyl-carrier-protein] reductase [NADH]">
    <location>
        <begin position="1"/>
        <end position="400"/>
    </location>
</feature>
<feature type="active site" description="Proton donor" evidence="1">
    <location>
        <position position="235"/>
    </location>
</feature>
<feature type="binding site" evidence="1">
    <location>
        <begin position="48"/>
        <end position="53"/>
    </location>
    <ligand>
        <name>NAD(+)</name>
        <dbReference type="ChEBI" id="CHEBI:57540"/>
    </ligand>
</feature>
<feature type="binding site" evidence="1">
    <location>
        <begin position="74"/>
        <end position="75"/>
    </location>
    <ligand>
        <name>NAD(+)</name>
        <dbReference type="ChEBI" id="CHEBI:57540"/>
    </ligand>
</feature>
<feature type="binding site" evidence="1">
    <location>
        <begin position="111"/>
        <end position="112"/>
    </location>
    <ligand>
        <name>NAD(+)</name>
        <dbReference type="ChEBI" id="CHEBI:57540"/>
    </ligand>
</feature>
<feature type="binding site" evidence="1">
    <location>
        <begin position="139"/>
        <end position="140"/>
    </location>
    <ligand>
        <name>NAD(+)</name>
        <dbReference type="ChEBI" id="CHEBI:57540"/>
    </ligand>
</feature>
<feature type="binding site" evidence="1">
    <location>
        <position position="225"/>
    </location>
    <ligand>
        <name>substrate</name>
    </ligand>
</feature>
<feature type="binding site" evidence="1">
    <location>
        <position position="244"/>
    </location>
    <ligand>
        <name>NAD(+)</name>
        <dbReference type="ChEBI" id="CHEBI:57540"/>
    </ligand>
</feature>
<feature type="binding site" evidence="1">
    <location>
        <begin position="273"/>
        <end position="275"/>
    </location>
    <ligand>
        <name>NAD(+)</name>
        <dbReference type="ChEBI" id="CHEBI:57540"/>
    </ligand>
</feature>
<feature type="site" description="Plays an important role in discriminating NADH against NADPH" evidence="1">
    <location>
        <position position="75"/>
    </location>
</feature>
<comment type="function">
    <text evidence="1">Involved in the final reduction of the elongation cycle of fatty acid synthesis (FAS II). Catalyzes the reduction of a carbon-carbon double bond in an enoyl moiety that is covalently linked to an acyl carrier protein (ACP).</text>
</comment>
<comment type="catalytic activity">
    <reaction evidence="1">
        <text>a 2,3-saturated acyl-[ACP] + NAD(+) = a (2E)-enoyl-[ACP] + NADH + H(+)</text>
        <dbReference type="Rhea" id="RHEA:10240"/>
        <dbReference type="Rhea" id="RHEA-COMP:9925"/>
        <dbReference type="Rhea" id="RHEA-COMP:9926"/>
        <dbReference type="ChEBI" id="CHEBI:15378"/>
        <dbReference type="ChEBI" id="CHEBI:57540"/>
        <dbReference type="ChEBI" id="CHEBI:57945"/>
        <dbReference type="ChEBI" id="CHEBI:78784"/>
        <dbReference type="ChEBI" id="CHEBI:78785"/>
        <dbReference type="EC" id="1.3.1.9"/>
    </reaction>
</comment>
<comment type="pathway">
    <text evidence="1">Lipid metabolism; fatty acid biosynthesis.</text>
</comment>
<comment type="subunit">
    <text evidence="1">Monomer.</text>
</comment>
<comment type="similarity">
    <text evidence="1">Belongs to the TER reductase family.</text>
</comment>
<accession>B8CRF2</accession>
<name>FABV_SHEPW</name>
<gene>
    <name evidence="1" type="primary">fabV</name>
    <name type="ordered locus">swp_3256</name>
</gene>
<organism>
    <name type="scientific">Shewanella piezotolerans (strain WP3 / JCM 13877)</name>
    <dbReference type="NCBI Taxonomy" id="225849"/>
    <lineage>
        <taxon>Bacteria</taxon>
        <taxon>Pseudomonadati</taxon>
        <taxon>Pseudomonadota</taxon>
        <taxon>Gammaproteobacteria</taxon>
        <taxon>Alteromonadales</taxon>
        <taxon>Shewanellaceae</taxon>
        <taxon>Shewanella</taxon>
    </lineage>
</organism>
<proteinExistence type="inferred from homology"/>
<protein>
    <recommendedName>
        <fullName evidence="1">Enoyl-[acyl-carrier-protein] reductase [NADH]</fullName>
        <shortName evidence="1">ENR</shortName>
        <ecNumber evidence="1">1.3.1.9</ecNumber>
    </recommendedName>
</protein>